<gene>
    <name evidence="1" type="primary">dnaJ</name>
    <name type="ordered locus">PP_4726</name>
</gene>
<name>DNAJ_PSEPK</name>
<organism>
    <name type="scientific">Pseudomonas putida (strain ATCC 47054 / DSM 6125 / CFBP 8728 / NCIMB 11950 / KT2440)</name>
    <dbReference type="NCBI Taxonomy" id="160488"/>
    <lineage>
        <taxon>Bacteria</taxon>
        <taxon>Pseudomonadati</taxon>
        <taxon>Pseudomonadota</taxon>
        <taxon>Gammaproteobacteria</taxon>
        <taxon>Pseudomonadales</taxon>
        <taxon>Pseudomonadaceae</taxon>
        <taxon>Pseudomonas</taxon>
    </lineage>
</organism>
<accession>Q88DU3</accession>
<protein>
    <recommendedName>
        <fullName evidence="1">Chaperone protein DnaJ</fullName>
    </recommendedName>
</protein>
<comment type="function">
    <text evidence="1">Participates actively in the response to hyperosmotic and heat shock by preventing the aggregation of stress-denatured proteins and by disaggregating proteins, also in an autonomous, DnaK-independent fashion. Unfolded proteins bind initially to DnaJ; upon interaction with the DnaJ-bound protein, DnaK hydrolyzes its bound ATP, resulting in the formation of a stable complex. GrpE releases ADP from DnaK; ATP binding to DnaK triggers the release of the substrate protein, thus completing the reaction cycle. Several rounds of ATP-dependent interactions between DnaJ, DnaK and GrpE are required for fully efficient folding. Also involved, together with DnaK and GrpE, in the DNA replication of plasmids through activation of initiation proteins.</text>
</comment>
<comment type="cofactor">
    <cofactor evidence="1">
        <name>Zn(2+)</name>
        <dbReference type="ChEBI" id="CHEBI:29105"/>
    </cofactor>
    <text evidence="1">Binds 2 Zn(2+) ions per monomer.</text>
</comment>
<comment type="subunit">
    <text evidence="1">Homodimer.</text>
</comment>
<comment type="subcellular location">
    <subcellularLocation>
        <location evidence="1">Cytoplasm</location>
    </subcellularLocation>
</comment>
<comment type="domain">
    <text evidence="1">The J domain is necessary and sufficient to stimulate DnaK ATPase activity. Zinc center 1 plays an important role in the autonomous, DnaK-independent chaperone activity of DnaJ. Zinc center 2 is essential for interaction with DnaK and for DnaJ activity.</text>
</comment>
<comment type="similarity">
    <text evidence="1">Belongs to the DnaJ family.</text>
</comment>
<feature type="chain" id="PRO_0000070859" description="Chaperone protein DnaJ">
    <location>
        <begin position="1"/>
        <end position="375"/>
    </location>
</feature>
<feature type="domain" description="J" evidence="1">
    <location>
        <begin position="5"/>
        <end position="70"/>
    </location>
</feature>
<feature type="repeat" description="CXXCXGXG motif">
    <location>
        <begin position="147"/>
        <end position="154"/>
    </location>
</feature>
<feature type="repeat" description="CXXCXGXG motif">
    <location>
        <begin position="164"/>
        <end position="171"/>
    </location>
</feature>
<feature type="repeat" description="CXXCXGXG motif">
    <location>
        <begin position="186"/>
        <end position="193"/>
    </location>
</feature>
<feature type="repeat" description="CXXCXGXG motif">
    <location>
        <begin position="200"/>
        <end position="207"/>
    </location>
</feature>
<feature type="zinc finger region" description="CR-type" evidence="1">
    <location>
        <begin position="134"/>
        <end position="212"/>
    </location>
</feature>
<feature type="binding site" evidence="1">
    <location>
        <position position="147"/>
    </location>
    <ligand>
        <name>Zn(2+)</name>
        <dbReference type="ChEBI" id="CHEBI:29105"/>
        <label>1</label>
    </ligand>
</feature>
<feature type="binding site" evidence="1">
    <location>
        <position position="150"/>
    </location>
    <ligand>
        <name>Zn(2+)</name>
        <dbReference type="ChEBI" id="CHEBI:29105"/>
        <label>1</label>
    </ligand>
</feature>
<feature type="binding site" evidence="1">
    <location>
        <position position="164"/>
    </location>
    <ligand>
        <name>Zn(2+)</name>
        <dbReference type="ChEBI" id="CHEBI:29105"/>
        <label>2</label>
    </ligand>
</feature>
<feature type="binding site" evidence="1">
    <location>
        <position position="167"/>
    </location>
    <ligand>
        <name>Zn(2+)</name>
        <dbReference type="ChEBI" id="CHEBI:29105"/>
        <label>2</label>
    </ligand>
</feature>
<feature type="binding site" evidence="1">
    <location>
        <position position="186"/>
    </location>
    <ligand>
        <name>Zn(2+)</name>
        <dbReference type="ChEBI" id="CHEBI:29105"/>
        <label>2</label>
    </ligand>
</feature>
<feature type="binding site" evidence="1">
    <location>
        <position position="189"/>
    </location>
    <ligand>
        <name>Zn(2+)</name>
        <dbReference type="ChEBI" id="CHEBI:29105"/>
        <label>2</label>
    </ligand>
</feature>
<feature type="binding site" evidence="1">
    <location>
        <position position="200"/>
    </location>
    <ligand>
        <name>Zn(2+)</name>
        <dbReference type="ChEBI" id="CHEBI:29105"/>
        <label>1</label>
    </ligand>
</feature>
<feature type="binding site" evidence="1">
    <location>
        <position position="203"/>
    </location>
    <ligand>
        <name>Zn(2+)</name>
        <dbReference type="ChEBI" id="CHEBI:29105"/>
        <label>1</label>
    </ligand>
</feature>
<dbReference type="EMBL" id="AE015451">
    <property type="protein sequence ID" value="AAN70298.1"/>
    <property type="molecule type" value="Genomic_DNA"/>
</dbReference>
<dbReference type="RefSeq" id="NP_746834.1">
    <property type="nucleotide sequence ID" value="NC_002947.4"/>
</dbReference>
<dbReference type="RefSeq" id="WP_010955365.1">
    <property type="nucleotide sequence ID" value="NZ_CP169744.1"/>
</dbReference>
<dbReference type="SMR" id="Q88DU3"/>
<dbReference type="STRING" id="160488.PP_4726"/>
<dbReference type="PaxDb" id="160488-PP_4726"/>
<dbReference type="GeneID" id="83682443"/>
<dbReference type="KEGG" id="ppu:PP_4726"/>
<dbReference type="PATRIC" id="fig|160488.4.peg.5037"/>
<dbReference type="eggNOG" id="COG0484">
    <property type="taxonomic scope" value="Bacteria"/>
</dbReference>
<dbReference type="HOGENOM" id="CLU_017633_0_7_6"/>
<dbReference type="OrthoDB" id="9779889at2"/>
<dbReference type="PhylomeDB" id="Q88DU3"/>
<dbReference type="BioCyc" id="PPUT160488:G1G01-5054-MONOMER"/>
<dbReference type="Proteomes" id="UP000000556">
    <property type="component" value="Chromosome"/>
</dbReference>
<dbReference type="GO" id="GO:0005737">
    <property type="term" value="C:cytoplasm"/>
    <property type="evidence" value="ECO:0007669"/>
    <property type="project" value="UniProtKB-SubCell"/>
</dbReference>
<dbReference type="GO" id="GO:0005524">
    <property type="term" value="F:ATP binding"/>
    <property type="evidence" value="ECO:0007669"/>
    <property type="project" value="InterPro"/>
</dbReference>
<dbReference type="GO" id="GO:0031072">
    <property type="term" value="F:heat shock protein binding"/>
    <property type="evidence" value="ECO:0007669"/>
    <property type="project" value="InterPro"/>
</dbReference>
<dbReference type="GO" id="GO:0051082">
    <property type="term" value="F:unfolded protein binding"/>
    <property type="evidence" value="ECO:0007669"/>
    <property type="project" value="UniProtKB-UniRule"/>
</dbReference>
<dbReference type="GO" id="GO:0008270">
    <property type="term" value="F:zinc ion binding"/>
    <property type="evidence" value="ECO:0007669"/>
    <property type="project" value="UniProtKB-UniRule"/>
</dbReference>
<dbReference type="GO" id="GO:0051085">
    <property type="term" value="P:chaperone cofactor-dependent protein refolding"/>
    <property type="evidence" value="ECO:0007669"/>
    <property type="project" value="TreeGrafter"/>
</dbReference>
<dbReference type="GO" id="GO:0006260">
    <property type="term" value="P:DNA replication"/>
    <property type="evidence" value="ECO:0007669"/>
    <property type="project" value="UniProtKB-KW"/>
</dbReference>
<dbReference type="GO" id="GO:0042026">
    <property type="term" value="P:protein refolding"/>
    <property type="evidence" value="ECO:0007669"/>
    <property type="project" value="TreeGrafter"/>
</dbReference>
<dbReference type="GO" id="GO:0009408">
    <property type="term" value="P:response to heat"/>
    <property type="evidence" value="ECO:0007669"/>
    <property type="project" value="InterPro"/>
</dbReference>
<dbReference type="CDD" id="cd06257">
    <property type="entry name" value="DnaJ"/>
    <property type="match status" value="1"/>
</dbReference>
<dbReference type="CDD" id="cd10747">
    <property type="entry name" value="DnaJ_C"/>
    <property type="match status" value="1"/>
</dbReference>
<dbReference type="CDD" id="cd10719">
    <property type="entry name" value="DnaJ_zf"/>
    <property type="match status" value="1"/>
</dbReference>
<dbReference type="FunFam" id="1.10.287.110:FF:000051">
    <property type="entry name" value="Molecular chaperone DnaJ"/>
    <property type="match status" value="1"/>
</dbReference>
<dbReference type="FunFam" id="2.10.230.10:FF:000002">
    <property type="entry name" value="Molecular chaperone DnaJ"/>
    <property type="match status" value="1"/>
</dbReference>
<dbReference type="FunFam" id="2.60.260.20:FF:000004">
    <property type="entry name" value="Molecular chaperone DnaJ"/>
    <property type="match status" value="1"/>
</dbReference>
<dbReference type="Gene3D" id="1.10.287.110">
    <property type="entry name" value="DnaJ domain"/>
    <property type="match status" value="1"/>
</dbReference>
<dbReference type="Gene3D" id="2.10.230.10">
    <property type="entry name" value="Heat shock protein DnaJ, cysteine-rich domain"/>
    <property type="match status" value="1"/>
</dbReference>
<dbReference type="Gene3D" id="2.60.260.20">
    <property type="entry name" value="Urease metallochaperone UreE, N-terminal domain"/>
    <property type="match status" value="2"/>
</dbReference>
<dbReference type="HAMAP" id="MF_01152">
    <property type="entry name" value="DnaJ"/>
    <property type="match status" value="1"/>
</dbReference>
<dbReference type="InterPro" id="IPR012724">
    <property type="entry name" value="DnaJ"/>
</dbReference>
<dbReference type="InterPro" id="IPR002939">
    <property type="entry name" value="DnaJ_C"/>
</dbReference>
<dbReference type="InterPro" id="IPR001623">
    <property type="entry name" value="DnaJ_domain"/>
</dbReference>
<dbReference type="InterPro" id="IPR018253">
    <property type="entry name" value="DnaJ_domain_CS"/>
</dbReference>
<dbReference type="InterPro" id="IPR008971">
    <property type="entry name" value="HSP40/DnaJ_pept-bd"/>
</dbReference>
<dbReference type="InterPro" id="IPR001305">
    <property type="entry name" value="HSP_DnaJ_Cys-rich_dom"/>
</dbReference>
<dbReference type="InterPro" id="IPR036410">
    <property type="entry name" value="HSP_DnaJ_Cys-rich_dom_sf"/>
</dbReference>
<dbReference type="InterPro" id="IPR036869">
    <property type="entry name" value="J_dom_sf"/>
</dbReference>
<dbReference type="NCBIfam" id="TIGR02349">
    <property type="entry name" value="DnaJ_bact"/>
    <property type="match status" value="1"/>
</dbReference>
<dbReference type="NCBIfam" id="NF008035">
    <property type="entry name" value="PRK10767.1"/>
    <property type="match status" value="1"/>
</dbReference>
<dbReference type="PANTHER" id="PTHR43096:SF48">
    <property type="entry name" value="CHAPERONE PROTEIN DNAJ"/>
    <property type="match status" value="1"/>
</dbReference>
<dbReference type="PANTHER" id="PTHR43096">
    <property type="entry name" value="DNAJ HOMOLOG 1, MITOCHONDRIAL-RELATED"/>
    <property type="match status" value="1"/>
</dbReference>
<dbReference type="Pfam" id="PF00226">
    <property type="entry name" value="DnaJ"/>
    <property type="match status" value="1"/>
</dbReference>
<dbReference type="Pfam" id="PF01556">
    <property type="entry name" value="DnaJ_C"/>
    <property type="match status" value="1"/>
</dbReference>
<dbReference type="Pfam" id="PF00684">
    <property type="entry name" value="DnaJ_CXXCXGXG"/>
    <property type="match status" value="1"/>
</dbReference>
<dbReference type="PRINTS" id="PR00625">
    <property type="entry name" value="JDOMAIN"/>
</dbReference>
<dbReference type="SMART" id="SM00271">
    <property type="entry name" value="DnaJ"/>
    <property type="match status" value="1"/>
</dbReference>
<dbReference type="SUPFAM" id="SSF46565">
    <property type="entry name" value="Chaperone J-domain"/>
    <property type="match status" value="1"/>
</dbReference>
<dbReference type="SUPFAM" id="SSF57938">
    <property type="entry name" value="DnaJ/Hsp40 cysteine-rich domain"/>
    <property type="match status" value="1"/>
</dbReference>
<dbReference type="SUPFAM" id="SSF49493">
    <property type="entry name" value="HSP40/DnaJ peptide-binding domain"/>
    <property type="match status" value="2"/>
</dbReference>
<dbReference type="PROSITE" id="PS00636">
    <property type="entry name" value="DNAJ_1"/>
    <property type="match status" value="1"/>
</dbReference>
<dbReference type="PROSITE" id="PS50076">
    <property type="entry name" value="DNAJ_2"/>
    <property type="match status" value="1"/>
</dbReference>
<dbReference type="PROSITE" id="PS51188">
    <property type="entry name" value="ZF_CR"/>
    <property type="match status" value="1"/>
</dbReference>
<sequence length="375" mass="40181">MSKRDYYEVLGVERGATEADLKKAYRRLAMKYHPDRNPGDKESEDKFKEANEAYEVLSDASKRAAFDQYGHAGVDPSMGGGGAGFGGANFSDIFGDVFSDFFGGGGRGGGRGGAQRGSDLRYTLELNLEEAVRGTTVSIRVPTLVNCQPCDGSGAKKGSTPSTCPTCGGIGQVRMQQGFFSVQQTCPRCHGQGKIITDPCTSCHGEGRVEEYKTLSVKVPAGVDTGDRIRLSGEGEAGTHGGPTGDLYVVISVREHEIFQRDGKHLYCEVPISYTDAALGGELEVPTLDGRVKLKIPEGTQTGKQFRLRGKGVAPVRGGGAGDLLCRVAVETPVNLSRRQRELLEELRDSLEGDSSHSPKASGWFDGVKRFFGDL</sequence>
<keyword id="KW-0143">Chaperone</keyword>
<keyword id="KW-0963">Cytoplasm</keyword>
<keyword id="KW-0235">DNA replication</keyword>
<keyword id="KW-0479">Metal-binding</keyword>
<keyword id="KW-1185">Reference proteome</keyword>
<keyword id="KW-0677">Repeat</keyword>
<keyword id="KW-0346">Stress response</keyword>
<keyword id="KW-0862">Zinc</keyword>
<keyword id="KW-0863">Zinc-finger</keyword>
<proteinExistence type="inferred from homology"/>
<reference key="1">
    <citation type="journal article" date="2002" name="Environ. Microbiol.">
        <title>Complete genome sequence and comparative analysis of the metabolically versatile Pseudomonas putida KT2440.</title>
        <authorList>
            <person name="Nelson K.E."/>
            <person name="Weinel C."/>
            <person name="Paulsen I.T."/>
            <person name="Dodson R.J."/>
            <person name="Hilbert H."/>
            <person name="Martins dos Santos V.A.P."/>
            <person name="Fouts D.E."/>
            <person name="Gill S.R."/>
            <person name="Pop M."/>
            <person name="Holmes M."/>
            <person name="Brinkac L.M."/>
            <person name="Beanan M.J."/>
            <person name="DeBoy R.T."/>
            <person name="Daugherty S.C."/>
            <person name="Kolonay J.F."/>
            <person name="Madupu R."/>
            <person name="Nelson W.C."/>
            <person name="White O."/>
            <person name="Peterson J.D."/>
            <person name="Khouri H.M."/>
            <person name="Hance I."/>
            <person name="Chris Lee P."/>
            <person name="Holtzapple E.K."/>
            <person name="Scanlan D."/>
            <person name="Tran K."/>
            <person name="Moazzez A."/>
            <person name="Utterback T.R."/>
            <person name="Rizzo M."/>
            <person name="Lee K."/>
            <person name="Kosack D."/>
            <person name="Moestl D."/>
            <person name="Wedler H."/>
            <person name="Lauber J."/>
            <person name="Stjepandic D."/>
            <person name="Hoheisel J."/>
            <person name="Straetz M."/>
            <person name="Heim S."/>
            <person name="Kiewitz C."/>
            <person name="Eisen J.A."/>
            <person name="Timmis K.N."/>
            <person name="Duesterhoeft A."/>
            <person name="Tuemmler B."/>
            <person name="Fraser C.M."/>
        </authorList>
    </citation>
    <scope>NUCLEOTIDE SEQUENCE [LARGE SCALE GENOMIC DNA]</scope>
    <source>
        <strain>ATCC 47054 / DSM 6125 / CFBP 8728 / NCIMB 11950 / KT2440</strain>
    </source>
</reference>
<evidence type="ECO:0000255" key="1">
    <source>
        <dbReference type="HAMAP-Rule" id="MF_01152"/>
    </source>
</evidence>